<sequence length="1382" mass="154532">MKSPAVLAPGILVFLFTFVQKSDGECKEALVKSRMNVNMQYQLPNFTAETSIQNVVLHKHHIYLGAVNYIYVLNDKDLQKVAEYKTGPVLEHPDCFPCQDCSHKANLSGGVWKDNINMALLVDTYYDDQLISCGSVHRGTCQRHVLPPNNTADIESEVHCMYSPQADEETSQCPDCVVSALGTKVLLSEKERFINFFVGNTINSSYLPDHSLHSISVRRLKETQDGFKFLTDQSYIDVLPELQDSYPIKYVHAFESNHFIYFLTVQRETLDAQTFHTRIIRFCSTDSGLHSYMEMPLECILTEKRRKRSTKQEVFNILQAAYVSKPGAQLARQIGANLNDDILYGVFAQSKPDSSEPMNRSAVCAFPVKYVNEFFNKIVNKNNVRCLQHFYGPNHEHCFNRTLLRNSSGCEVRSDEYRTEFTTALPRVDLFTGQFNQVLLTSISTFIKGDLTIANLGTSEGRFMQVVVSRSGSLTPHVNFRLDSHPVSPEVIVEHPPNQNGYTLVVTGKKITKIPLNGLGCEHFQSCSQCLSAPSFVQCGWCRDKCVRLEECPSGTWTQETCLPAIYKVFPTSAPLEGGTTLTVCGWDFGFKRNNKFDLKKTRVLIGNESCTLTLSESTTNMLKCTVGPAMNEHFNMSIVISNSRGSVQYSTFSYVDPIITSISPNYGPKTGGTLLTLTGKHLNSGNSRHISIGGKTCTLKSVSHSILECYTPAQSTPSEFSIKLKIDLANREVNSFIYREDPIVYEIHPTKSFVSGGSTITGVGKNLNSVSILRMVINVHEAGRNFTVACQHRSNSEIICCTTPSLQQLNLQLPLKTKAFFMLDGIHSKYFDLIYVHNPVFKPFEKPVMISIGNENVLEIKGNDIDPEAVKGEVLKVGNKSCENIHSHSEAVLCTVPNDLLKLNSELNIEWKQAISSTVLGKVIVQPDQNFTGLIVGVVSISIILLLLLGLFLWLKKRKQIKDLGSELVRYDARVHTPHLDRLVSARSVSPTTEMVSNESVDYRATFPEDQFPNASQNGSCRQVQYPLTDLSPILTSGDSDVSSPLLQNTVHIDLSALNPELVQAVQHVVIGPSSLIVHFNEVIGRGHFGCVYHGTLLDNDDKKIHCAVKSLNRITDIGEVSQFLTEGIIMKDFSHPNVLSLLGICLRSEGSPLVVLPYMKHGDLRNFIRNETHNPTVKDLIGFGLQVAKGMEYLASKKFVHRDLAARNCMLDEKFTVKVADFGLARDVYDKEYYSVHNKTGAKLPVKWMALESLQTQKFTTKSDVWSFGVLLWELMTRGAPPYPDVNTFDITVYLLQGRRLLQPEYCPDALYEVMLKCWHPKAELRPSFSELVSRISAIFSTFIGEHYVHVNATYVNVKCVAPYPSLLSSQDNVNGEGDT</sequence>
<name>MET_MUNMU</name>
<evidence type="ECO:0000250" key="1"/>
<evidence type="ECO:0000250" key="2">
    <source>
        <dbReference type="UniProtKB" id="P08581"/>
    </source>
</evidence>
<evidence type="ECO:0000250" key="3">
    <source>
        <dbReference type="UniProtKB" id="P16056"/>
    </source>
</evidence>
<evidence type="ECO:0000255" key="4"/>
<evidence type="ECO:0000255" key="5">
    <source>
        <dbReference type="PROSITE-ProRule" id="PRU00159"/>
    </source>
</evidence>
<evidence type="ECO:0000255" key="6">
    <source>
        <dbReference type="PROSITE-ProRule" id="PRU00352"/>
    </source>
</evidence>
<evidence type="ECO:0000255" key="7">
    <source>
        <dbReference type="PROSITE-ProRule" id="PRU10028"/>
    </source>
</evidence>
<protein>
    <recommendedName>
        <fullName>Hepatocyte growth factor receptor</fullName>
        <shortName>HGF receptor</shortName>
        <ecNumber>2.7.10.1</ecNumber>
    </recommendedName>
    <alternativeName>
        <fullName>HGF/SF receptor</fullName>
    </alternativeName>
    <alternativeName>
        <fullName>Proto-oncogene c-Met</fullName>
    </alternativeName>
    <alternativeName>
        <fullName>Scatter factor receptor</fullName>
        <shortName>SF receptor</shortName>
    </alternativeName>
    <alternativeName>
        <fullName>Tyrosine-protein kinase Met</fullName>
    </alternativeName>
</protein>
<keyword id="KW-0067">ATP-binding</keyword>
<keyword id="KW-1015">Disulfide bond</keyword>
<keyword id="KW-0325">Glycoprotein</keyword>
<keyword id="KW-0418">Kinase</keyword>
<keyword id="KW-0472">Membrane</keyword>
<keyword id="KW-0547">Nucleotide-binding</keyword>
<keyword id="KW-0597">Phosphoprotein</keyword>
<keyword id="KW-0656">Proto-oncogene</keyword>
<keyword id="KW-0675">Receptor</keyword>
<keyword id="KW-0677">Repeat</keyword>
<keyword id="KW-0732">Signal</keyword>
<keyword id="KW-0808">Transferase</keyword>
<keyword id="KW-0812">Transmembrane</keyword>
<keyword id="KW-1133">Transmembrane helix</keyword>
<keyword id="KW-0829">Tyrosine-protein kinase</keyword>
<keyword id="KW-0832">Ubl conjugation</keyword>
<feature type="signal peptide" evidence="4">
    <location>
        <begin position="1"/>
        <end position="24"/>
    </location>
</feature>
<feature type="chain" id="PRO_0000260425" description="Hepatocyte growth factor receptor">
    <location>
        <begin position="25"/>
        <end position="1382"/>
    </location>
</feature>
<feature type="topological domain" description="Extracellular" evidence="4">
    <location>
        <begin position="25"/>
        <end position="933"/>
    </location>
</feature>
<feature type="transmembrane region" description="Helical" evidence="4">
    <location>
        <begin position="934"/>
        <end position="956"/>
    </location>
</feature>
<feature type="topological domain" description="Cytoplasmic" evidence="4">
    <location>
        <begin position="957"/>
        <end position="1382"/>
    </location>
</feature>
<feature type="domain" description="Sema" evidence="6">
    <location>
        <begin position="27"/>
        <end position="516"/>
    </location>
</feature>
<feature type="domain" description="IPT/TIG 1">
    <location>
        <begin position="564"/>
        <end position="656"/>
    </location>
</feature>
<feature type="domain" description="IPT/TIG 2">
    <location>
        <begin position="658"/>
        <end position="740"/>
    </location>
</feature>
<feature type="domain" description="IPT/TIG 3">
    <location>
        <begin position="743"/>
        <end position="837"/>
    </location>
</feature>
<feature type="domain" description="Protein kinase" evidence="5">
    <location>
        <begin position="1079"/>
        <end position="1346"/>
    </location>
</feature>
<feature type="region of interest" description="Interaction with RANBP9" evidence="1">
    <location>
        <begin position="1213"/>
        <end position="1382"/>
    </location>
</feature>
<feature type="region of interest" description="Interaction with MUC20" evidence="1">
    <location>
        <begin position="1321"/>
        <end position="1360"/>
    </location>
</feature>
<feature type="active site" description="Proton acceptor" evidence="5 7">
    <location>
        <position position="1205"/>
    </location>
</feature>
<feature type="binding site" evidence="5">
    <location>
        <begin position="1085"/>
        <end position="1093"/>
    </location>
    <ligand>
        <name>ATP</name>
        <dbReference type="ChEBI" id="CHEBI:30616"/>
    </ligand>
</feature>
<feature type="binding site" evidence="5">
    <location>
        <position position="1111"/>
    </location>
    <ligand>
        <name>ATP</name>
        <dbReference type="ChEBI" id="CHEBI:30616"/>
    </ligand>
</feature>
<feature type="site" description="Cleavage" evidence="4">
    <location>
        <begin position="308"/>
        <end position="309"/>
    </location>
</feature>
<feature type="modified residue" description="Phosphoserine" evidence="2">
    <location>
        <position position="967"/>
    </location>
</feature>
<feature type="modified residue" description="Phosphothreonine" evidence="2">
    <location>
        <position position="978"/>
    </location>
</feature>
<feature type="modified residue" description="Phosphoserine" evidence="2">
    <location>
        <position position="991"/>
    </location>
</feature>
<feature type="modified residue" description="Phosphoserine" evidence="2">
    <location>
        <position position="998"/>
    </location>
</feature>
<feature type="modified residue" description="Phosphoserine" evidence="2">
    <location>
        <position position="1001"/>
    </location>
</feature>
<feature type="modified residue" description="Phosphotyrosine" evidence="2">
    <location>
        <position position="1004"/>
    </location>
</feature>
<feature type="modified residue" description="Phosphotyrosine" evidence="2">
    <location>
        <position position="1231"/>
    </location>
</feature>
<feature type="modified residue" description="Phosphotyrosine; by autocatalysis" evidence="2">
    <location>
        <position position="1235"/>
    </location>
</feature>
<feature type="modified residue" description="Phosphotyrosine; by autocatalysis" evidence="2">
    <location>
        <position position="1236"/>
    </location>
</feature>
<feature type="modified residue" description="Phosphothreonine" evidence="2">
    <location>
        <position position="1290"/>
    </location>
</feature>
<feature type="modified residue" description="Phosphotyrosine; by autocatalysis" evidence="2">
    <location>
        <position position="1350"/>
    </location>
</feature>
<feature type="modified residue" description="Phosphotyrosine; by autocatalysis" evidence="2">
    <location>
        <position position="1357"/>
    </location>
</feature>
<feature type="modified residue" description="Phosphotyrosine" evidence="2">
    <location>
        <position position="1366"/>
    </location>
</feature>
<feature type="glycosylation site" description="N-linked (GlcNAc...) asparagine" evidence="4">
    <location>
        <position position="45"/>
    </location>
</feature>
<feature type="glycosylation site" description="N-linked (GlcNAc...) asparagine" evidence="4">
    <location>
        <position position="106"/>
    </location>
</feature>
<feature type="glycosylation site" description="N-linked (GlcNAc...) asparagine" evidence="4">
    <location>
        <position position="149"/>
    </location>
</feature>
<feature type="glycosylation site" description="N-linked (GlcNAc...) asparagine" evidence="4">
    <location>
        <position position="203"/>
    </location>
</feature>
<feature type="glycosylation site" description="N-linked (GlcNAc...) asparagine" evidence="4">
    <location>
        <position position="359"/>
    </location>
</feature>
<feature type="glycosylation site" description="N-linked (GlcNAc...) asparagine" evidence="4">
    <location>
        <position position="400"/>
    </location>
</feature>
<feature type="glycosylation site" description="N-linked (GlcNAc...) asparagine" evidence="4">
    <location>
        <position position="406"/>
    </location>
</feature>
<feature type="glycosylation site" description="O-linked (Man) threonine" evidence="2">
    <location>
        <position position="583"/>
    </location>
</feature>
<feature type="glycosylation site" description="N-linked (GlcNAc...) asparagine" evidence="4">
    <location>
        <position position="608"/>
    </location>
</feature>
<feature type="glycosylation site" description="N-linked (GlcNAc...) asparagine" evidence="4">
    <location>
        <position position="636"/>
    </location>
</feature>
<feature type="glycosylation site" description="O-linked (Man) threonine" evidence="2">
    <location>
        <position position="677"/>
    </location>
</feature>
<feature type="glycosylation site" description="O-linked (Man) threonine" evidence="2">
    <location>
        <position position="762"/>
    </location>
</feature>
<feature type="glycosylation site" description="N-linked (GlcNAc...) asparagine" evidence="4">
    <location>
        <position position="786"/>
    </location>
</feature>
<feature type="glycosylation site" description="N-linked (GlcNAc...) asparagine" evidence="4">
    <location>
        <position position="880"/>
    </location>
</feature>
<feature type="glycosylation site" description="N-linked (GlcNAc...) asparagine" evidence="4">
    <location>
        <position position="931"/>
    </location>
</feature>
<feature type="disulfide bond" evidence="6">
    <location>
        <begin position="95"/>
        <end position="101"/>
    </location>
</feature>
<feature type="disulfide bond" evidence="6">
    <location>
        <begin position="98"/>
        <end position="160"/>
    </location>
</feature>
<feature type="disulfide bond" evidence="6">
    <location>
        <begin position="133"/>
        <end position="141"/>
    </location>
</feature>
<feature type="disulfide bond" evidence="6">
    <location>
        <begin position="173"/>
        <end position="176"/>
    </location>
</feature>
<feature type="disulfide bond" evidence="6">
    <location>
        <begin position="299"/>
        <end position="364"/>
    </location>
</feature>
<feature type="disulfide bond" evidence="6">
    <location>
        <begin position="386"/>
        <end position="398"/>
    </location>
</feature>
<feature type="disulfide bond" evidence="6">
    <location>
        <begin position="521"/>
        <end position="539"/>
    </location>
</feature>
<feature type="disulfide bond" evidence="6">
    <location>
        <begin position="527"/>
        <end position="562"/>
    </location>
</feature>
<feature type="disulfide bond" evidence="6">
    <location>
        <begin position="530"/>
        <end position="546"/>
    </location>
</feature>
<feature type="disulfide bond" evidence="6">
    <location>
        <begin position="542"/>
        <end position="552"/>
    </location>
</feature>
<dbReference type="EC" id="2.7.10.1"/>
<dbReference type="EMBL" id="DP000178">
    <property type="protein sequence ID" value="ABI75280.1"/>
    <property type="molecule type" value="Genomic_DNA"/>
</dbReference>
<dbReference type="SMR" id="Q09YK0"/>
<dbReference type="GlyCosmos" id="Q09YK0">
    <property type="glycosylation" value="12 sites, No reported glycans"/>
</dbReference>
<dbReference type="GO" id="GO:0005886">
    <property type="term" value="C:plasma membrane"/>
    <property type="evidence" value="ECO:0007669"/>
    <property type="project" value="TreeGrafter"/>
</dbReference>
<dbReference type="GO" id="GO:0002116">
    <property type="term" value="C:semaphorin receptor complex"/>
    <property type="evidence" value="ECO:0007669"/>
    <property type="project" value="TreeGrafter"/>
</dbReference>
<dbReference type="GO" id="GO:0005524">
    <property type="term" value="F:ATP binding"/>
    <property type="evidence" value="ECO:0007669"/>
    <property type="project" value="UniProtKB-KW"/>
</dbReference>
<dbReference type="GO" id="GO:0017154">
    <property type="term" value="F:semaphorin receptor activity"/>
    <property type="evidence" value="ECO:0007669"/>
    <property type="project" value="InterPro"/>
</dbReference>
<dbReference type="GO" id="GO:0004714">
    <property type="term" value="F:transmembrane receptor protein tyrosine kinase activity"/>
    <property type="evidence" value="ECO:0007669"/>
    <property type="project" value="UniProtKB-EC"/>
</dbReference>
<dbReference type="GO" id="GO:0007169">
    <property type="term" value="P:cell surface receptor protein tyrosine kinase signaling pathway"/>
    <property type="evidence" value="ECO:0007669"/>
    <property type="project" value="InterPro"/>
</dbReference>
<dbReference type="GO" id="GO:0050918">
    <property type="term" value="P:positive chemotaxis"/>
    <property type="evidence" value="ECO:0000250"/>
    <property type="project" value="UniProtKB"/>
</dbReference>
<dbReference type="GO" id="GO:2001028">
    <property type="term" value="P:positive regulation of endothelial cell chemotaxis"/>
    <property type="evidence" value="ECO:0000250"/>
    <property type="project" value="UniProtKB"/>
</dbReference>
<dbReference type="GO" id="GO:0071526">
    <property type="term" value="P:semaphorin-plexin signaling pathway"/>
    <property type="evidence" value="ECO:0000250"/>
    <property type="project" value="UniProtKB"/>
</dbReference>
<dbReference type="CDD" id="cd00603">
    <property type="entry name" value="IPT_PCSR"/>
    <property type="match status" value="1"/>
</dbReference>
<dbReference type="CDD" id="cd01180">
    <property type="entry name" value="IPT_plexin_repeat1"/>
    <property type="match status" value="1"/>
</dbReference>
<dbReference type="CDD" id="cd05058">
    <property type="entry name" value="PTKc_Met_Ron"/>
    <property type="match status" value="1"/>
</dbReference>
<dbReference type="FunFam" id="1.10.510.10:FF:000093">
    <property type="entry name" value="Hepatocyte growth factor receptor"/>
    <property type="match status" value="1"/>
</dbReference>
<dbReference type="FunFam" id="2.130.10.10:FF:000088">
    <property type="entry name" value="Hepatocyte growth factor receptor"/>
    <property type="match status" value="1"/>
</dbReference>
<dbReference type="FunFam" id="2.60.40.10:FF:000213">
    <property type="entry name" value="Hepatocyte growth factor receptor"/>
    <property type="match status" value="1"/>
</dbReference>
<dbReference type="FunFam" id="2.60.40.10:FF:000400">
    <property type="entry name" value="Hepatocyte growth factor receptor"/>
    <property type="match status" value="1"/>
</dbReference>
<dbReference type="FunFam" id="2.60.40.10:FF:002708">
    <property type="entry name" value="Hepatocyte growth factor receptor"/>
    <property type="match status" value="1"/>
</dbReference>
<dbReference type="FunFam" id="3.30.200.20:FF:000188">
    <property type="entry name" value="Hepatocyte growth factor receptor"/>
    <property type="match status" value="1"/>
</dbReference>
<dbReference type="FunFam" id="3.30.1680.10:FF:000006">
    <property type="entry name" value="Macrophage-stimulating 1 receptor b"/>
    <property type="match status" value="1"/>
</dbReference>
<dbReference type="Gene3D" id="2.60.40.10">
    <property type="entry name" value="Immunoglobulins"/>
    <property type="match status" value="3"/>
</dbReference>
<dbReference type="Gene3D" id="3.30.200.20">
    <property type="entry name" value="Phosphorylase Kinase, domain 1"/>
    <property type="match status" value="1"/>
</dbReference>
<dbReference type="Gene3D" id="1.10.510.10">
    <property type="entry name" value="Transferase(Phosphotransferase) domain 1"/>
    <property type="match status" value="1"/>
</dbReference>
<dbReference type="Gene3D" id="2.130.10.10">
    <property type="entry name" value="YVTN repeat-like/Quinoprotein amine dehydrogenase"/>
    <property type="match status" value="1"/>
</dbReference>
<dbReference type="InterPro" id="IPR013783">
    <property type="entry name" value="Ig-like_fold"/>
</dbReference>
<dbReference type="InterPro" id="IPR014756">
    <property type="entry name" value="Ig_E-set"/>
</dbReference>
<dbReference type="InterPro" id="IPR002909">
    <property type="entry name" value="IPT_dom"/>
</dbReference>
<dbReference type="InterPro" id="IPR011009">
    <property type="entry name" value="Kinase-like_dom_sf"/>
</dbReference>
<dbReference type="InterPro" id="IPR031148">
    <property type="entry name" value="Plexin"/>
</dbReference>
<dbReference type="InterPro" id="IPR002165">
    <property type="entry name" value="Plexin_repeat"/>
</dbReference>
<dbReference type="InterPro" id="IPR000719">
    <property type="entry name" value="Prot_kinase_dom"/>
</dbReference>
<dbReference type="InterPro" id="IPR017441">
    <property type="entry name" value="Protein_kinase_ATP_BS"/>
</dbReference>
<dbReference type="InterPro" id="IPR016201">
    <property type="entry name" value="PSI"/>
</dbReference>
<dbReference type="InterPro" id="IPR001627">
    <property type="entry name" value="Semap_dom"/>
</dbReference>
<dbReference type="InterPro" id="IPR036352">
    <property type="entry name" value="Semap_dom_sf"/>
</dbReference>
<dbReference type="InterPro" id="IPR001245">
    <property type="entry name" value="Ser-Thr/Tyr_kinase_cat_dom"/>
</dbReference>
<dbReference type="InterPro" id="IPR008266">
    <property type="entry name" value="Tyr_kinase_AS"/>
</dbReference>
<dbReference type="InterPro" id="IPR020635">
    <property type="entry name" value="Tyr_kinase_cat_dom"/>
</dbReference>
<dbReference type="InterPro" id="IPR016244">
    <property type="entry name" value="Tyr_kinase_HGF/MSP_rcpt"/>
</dbReference>
<dbReference type="InterPro" id="IPR015943">
    <property type="entry name" value="WD40/YVTN_repeat-like_dom_sf"/>
</dbReference>
<dbReference type="PANTHER" id="PTHR22625:SF61">
    <property type="entry name" value="HEPATOCYTE GROWTH FACTOR RECEPTOR"/>
    <property type="match status" value="1"/>
</dbReference>
<dbReference type="PANTHER" id="PTHR22625">
    <property type="entry name" value="PLEXIN"/>
    <property type="match status" value="1"/>
</dbReference>
<dbReference type="Pfam" id="PF07714">
    <property type="entry name" value="PK_Tyr_Ser-Thr"/>
    <property type="match status" value="1"/>
</dbReference>
<dbReference type="Pfam" id="PF01437">
    <property type="entry name" value="PSI"/>
    <property type="match status" value="1"/>
</dbReference>
<dbReference type="Pfam" id="PF01403">
    <property type="entry name" value="Sema"/>
    <property type="match status" value="1"/>
</dbReference>
<dbReference type="Pfam" id="PF01833">
    <property type="entry name" value="TIG"/>
    <property type="match status" value="3"/>
</dbReference>
<dbReference type="PIRSF" id="PIRSF000617">
    <property type="entry name" value="TyrPK_HGF-R"/>
    <property type="match status" value="1"/>
</dbReference>
<dbReference type="PRINTS" id="PR00109">
    <property type="entry name" value="TYRKINASE"/>
</dbReference>
<dbReference type="SMART" id="SM00429">
    <property type="entry name" value="IPT"/>
    <property type="match status" value="4"/>
</dbReference>
<dbReference type="SMART" id="SM00423">
    <property type="entry name" value="PSI"/>
    <property type="match status" value="1"/>
</dbReference>
<dbReference type="SMART" id="SM00630">
    <property type="entry name" value="Sema"/>
    <property type="match status" value="1"/>
</dbReference>
<dbReference type="SMART" id="SM00219">
    <property type="entry name" value="TyrKc"/>
    <property type="match status" value="1"/>
</dbReference>
<dbReference type="SUPFAM" id="SSF81296">
    <property type="entry name" value="E set domains"/>
    <property type="match status" value="3"/>
</dbReference>
<dbReference type="SUPFAM" id="SSF103575">
    <property type="entry name" value="Plexin repeat"/>
    <property type="match status" value="1"/>
</dbReference>
<dbReference type="SUPFAM" id="SSF56112">
    <property type="entry name" value="Protein kinase-like (PK-like)"/>
    <property type="match status" value="1"/>
</dbReference>
<dbReference type="SUPFAM" id="SSF101912">
    <property type="entry name" value="Sema domain"/>
    <property type="match status" value="1"/>
</dbReference>
<dbReference type="PROSITE" id="PS00107">
    <property type="entry name" value="PROTEIN_KINASE_ATP"/>
    <property type="match status" value="1"/>
</dbReference>
<dbReference type="PROSITE" id="PS50011">
    <property type="entry name" value="PROTEIN_KINASE_DOM"/>
    <property type="match status" value="1"/>
</dbReference>
<dbReference type="PROSITE" id="PS00109">
    <property type="entry name" value="PROTEIN_KINASE_TYR"/>
    <property type="match status" value="1"/>
</dbReference>
<dbReference type="PROSITE" id="PS51004">
    <property type="entry name" value="SEMA"/>
    <property type="match status" value="1"/>
</dbReference>
<accession>Q09YK0</accession>
<organism>
    <name type="scientific">Muntiacus muntjak</name>
    <name type="common">Barking deer</name>
    <name type="synonym">Indian muntjac</name>
    <dbReference type="NCBI Taxonomy" id="9888"/>
    <lineage>
        <taxon>Eukaryota</taxon>
        <taxon>Metazoa</taxon>
        <taxon>Chordata</taxon>
        <taxon>Craniata</taxon>
        <taxon>Vertebrata</taxon>
        <taxon>Euteleostomi</taxon>
        <taxon>Mammalia</taxon>
        <taxon>Eutheria</taxon>
        <taxon>Laurasiatheria</taxon>
        <taxon>Artiodactyla</taxon>
        <taxon>Ruminantia</taxon>
        <taxon>Pecora</taxon>
        <taxon>Cervidae</taxon>
        <taxon>Muntiacinae</taxon>
        <taxon>Muntiacus</taxon>
    </lineage>
</organism>
<comment type="function">
    <text evidence="1">Receptor tyrosine kinase that transduces signals from the extracellular matrix into the cytoplasm by binding to hepatocyte growth factor/HGF ligand. Regulates many physiological processes including proliferation, scattering, morphogenesis and survival. Ligand binding at the cell surface induces autophosphorylation of MET on its intracellular domain that provides docking sites for downstream signaling molecules. Following activation by ligand, interacts with the PI3-kinase subunit PIK3R1, PLCG1, SRC, GRB2, STAT3 or the adapter GAB1. Recruitment of these downstream effectors by MET leads to the activation of several signaling cascades including the RAS-ERK, PI3 kinase-AKT, or PLCgamma-PKC. The RAS-ERK activation is associated with the morphogenetic effects while PI3K/AKT coordinates prosurvival effects. During embryonic development, MET signaling plays a role in gastrulation, development and migration of muscles and neuronal precursors, angiogenesis and kidney formation. In adults, participates in wound healing as well as organ regeneration and tissue remodeling. Also promotes differentiation and proliferation of hematopoietic cells (By similarity).</text>
</comment>
<comment type="catalytic activity">
    <reaction evidence="7">
        <text>L-tyrosyl-[protein] + ATP = O-phospho-L-tyrosyl-[protein] + ADP + H(+)</text>
        <dbReference type="Rhea" id="RHEA:10596"/>
        <dbReference type="Rhea" id="RHEA-COMP:10136"/>
        <dbReference type="Rhea" id="RHEA-COMP:20101"/>
        <dbReference type="ChEBI" id="CHEBI:15378"/>
        <dbReference type="ChEBI" id="CHEBI:30616"/>
        <dbReference type="ChEBI" id="CHEBI:46858"/>
        <dbReference type="ChEBI" id="CHEBI:61978"/>
        <dbReference type="ChEBI" id="CHEBI:456216"/>
        <dbReference type="EC" id="2.7.10.1"/>
    </reaction>
</comment>
<comment type="activity regulation">
    <text evidence="1">In its inactive state, the C-terminal tail interacts with the catalytic domain and inhibits the kinase activity. Upon ligand binding, the C-terminal tail is displaced and becomes phosphorylated, thus increasing the kinase activity (By similarity).</text>
</comment>
<comment type="subunit">
    <text evidence="2 3">Heterodimer made of an alpha chain (50 kDa) and a beta chain (145 kDa) which are disulfide linked. Binds PLXNB1. Interacts when phosphorylated with downstream effectors including STAT3, PIK3R1, SRC, PCLG1, GRB2 and GAB1. Interacts with SPSB1, SPSB2 and SPSB4. Interacts with INPP5D/SHIP1. When phosphorylated at Tyr-1357, interacts with INPPL1/SHIP2. Interacts with RANBP9 and RANBP10, as well as SPSB1, SPSB2, SPSB3 and SPSB4. SPSB1 binding occurs in the presence and in the absence of HGF, however HGF treatment has a positive effect on this interaction. Interacts with MUC20; prevents interaction with GRB2 and suppresses hepatocyte growth factor-induced cell proliferation. Interacts with GRB10. Interacts with PTPN1 and PTPN2. Interacts with HSP90AA1 and HSP90AB1; the interaction suppresses MET kinase activity. Interacts with tensin TNS3 (By similarity). Interacts (when phosphorylated) with tensin TNS4 (via SH2 domain); the interaction increases MET protein stability by inhibiting MET endocytosis and subsequent lysosomal degradation (By similarity).</text>
</comment>
<comment type="subcellular location">
    <subcellularLocation>
        <location evidence="1">Membrane</location>
        <topology evidence="1">Single-pass type I membrane protein</topology>
    </subcellularLocation>
</comment>
<comment type="domain">
    <text evidence="1">The kinase domain is involved in SPSB1 binding.</text>
</comment>
<comment type="domain">
    <text evidence="1">The beta-propeller Sema domain mediates binding to HGF.</text>
</comment>
<comment type="PTM">
    <text evidence="2">Autophosphorylated in response to ligand binding on Tyr-1235 and Tyr-1236 in the kinase domain leading to further phosphorylation of Tyr-1350 and Tyr-1357 in the C-terminal multifunctional docking site. Dephosphorylated by PTPRJ at Tyr-1350 and Tyr-1366. Dephosphorylated by PTPN1 and PTPN2 (By similarity).</text>
</comment>
<comment type="PTM">
    <text evidence="2">Ubiquitinated. Ubiquitination by CBL regulates the receptor stability and activity through proteasomal degradation (By similarity).</text>
</comment>
<comment type="PTM">
    <text evidence="2">O-mannosylation of IPT/TIG domains by TMEM260 is required for protein maturation. O-mannosylated residues are composed of single mannose glycans that are not elongated or modified.</text>
</comment>
<comment type="similarity">
    <text evidence="5">Belongs to the protein kinase superfamily. Tyr protein kinase family.</text>
</comment>
<gene>
    <name type="primary">MET</name>
</gene>
<proteinExistence type="inferred from homology"/>
<reference key="1">
    <citation type="submission" date="2006-09" db="EMBL/GenBank/DDBJ databases">
        <title>NISC comparative sequencing initiative.</title>
        <authorList>
            <person name="Antonellis A."/>
            <person name="Ayele K."/>
            <person name="Benjamin B."/>
            <person name="Blakesley R.W."/>
            <person name="Boakye A."/>
            <person name="Bouffard G.G."/>
            <person name="Brinkley C."/>
            <person name="Brooks S."/>
            <person name="Chu G."/>
            <person name="Coleman H."/>
            <person name="Engle J."/>
            <person name="Gestole M."/>
            <person name="Greene A."/>
            <person name="Guan X."/>
            <person name="Gupta J."/>
            <person name="Haghighi P."/>
            <person name="Han J."/>
            <person name="Hansen N."/>
            <person name="Ho S.-L."/>
            <person name="Hu P."/>
            <person name="Hunter G."/>
            <person name="Hurle B."/>
            <person name="Idol J.R."/>
            <person name="Kwong P."/>
            <person name="Laric P."/>
            <person name="Larson S."/>
            <person name="Lee-Lin S.-Q."/>
            <person name="Legaspi R."/>
            <person name="Madden M."/>
            <person name="Maduro Q.L."/>
            <person name="Maduro V.B."/>
            <person name="Margulies E.H."/>
            <person name="Masiello C."/>
            <person name="Maskeri B."/>
            <person name="McDowell J."/>
            <person name="Mojidi H.A."/>
            <person name="Mullikin J.C."/>
            <person name="Oestreicher J.S."/>
            <person name="Park M."/>
            <person name="Portnoy M.E."/>
            <person name="Prasad A."/>
            <person name="Puri O."/>
            <person name="Reddix-Dugue N."/>
            <person name="Schandler K."/>
            <person name="Schueler M.G."/>
            <person name="Sison C."/>
            <person name="Stantripop S."/>
            <person name="Stephen E."/>
            <person name="Taye A."/>
            <person name="Thomas J.W."/>
            <person name="Thomas P.J."/>
            <person name="Tsipouri V."/>
            <person name="Ung L."/>
            <person name="Vogt J.L."/>
            <person name="Wetherby K.D."/>
            <person name="Young A."/>
            <person name="Green E.D."/>
        </authorList>
    </citation>
    <scope>NUCLEOTIDE SEQUENCE [LARGE SCALE GENOMIC DNA]</scope>
</reference>